<accession>O53165</accession>
<accession>F2GES5</accession>
<accession>I6Y6M9</accession>
<accession>Q7D8D9</accession>
<evidence type="ECO:0000255" key="1">
    <source>
        <dbReference type="PROSITE-ProRule" id="PRU00335"/>
    </source>
</evidence>
<evidence type="ECO:0000269" key="2">
    <source>
    </source>
</evidence>
<evidence type="ECO:0000305" key="3"/>
<evidence type="ECO:0000312" key="4">
    <source>
        <dbReference type="EMBL" id="CCP44234.1"/>
    </source>
</evidence>
<protein>
    <recommendedName>
        <fullName evidence="3">HTH-type transcriptional repressor Rv1474c</fullName>
    </recommendedName>
</protein>
<reference key="1">
    <citation type="journal article" date="1998" name="Nature">
        <title>Deciphering the biology of Mycobacterium tuberculosis from the complete genome sequence.</title>
        <authorList>
            <person name="Cole S.T."/>
            <person name="Brosch R."/>
            <person name="Parkhill J."/>
            <person name="Garnier T."/>
            <person name="Churcher C.M."/>
            <person name="Harris D.E."/>
            <person name="Gordon S.V."/>
            <person name="Eiglmeier K."/>
            <person name="Gas S."/>
            <person name="Barry C.E. III"/>
            <person name="Tekaia F."/>
            <person name="Badcock K."/>
            <person name="Basham D."/>
            <person name="Brown D."/>
            <person name="Chillingworth T."/>
            <person name="Connor R."/>
            <person name="Davies R.M."/>
            <person name="Devlin K."/>
            <person name="Feltwell T."/>
            <person name="Gentles S."/>
            <person name="Hamlin N."/>
            <person name="Holroyd S."/>
            <person name="Hornsby T."/>
            <person name="Jagels K."/>
            <person name="Krogh A."/>
            <person name="McLean J."/>
            <person name="Moule S."/>
            <person name="Murphy L.D."/>
            <person name="Oliver S."/>
            <person name="Osborne J."/>
            <person name="Quail M.A."/>
            <person name="Rajandream M.A."/>
            <person name="Rogers J."/>
            <person name="Rutter S."/>
            <person name="Seeger K."/>
            <person name="Skelton S."/>
            <person name="Squares S."/>
            <person name="Squares R."/>
            <person name="Sulston J.E."/>
            <person name="Taylor K."/>
            <person name="Whitehead S."/>
            <person name="Barrell B.G."/>
        </authorList>
    </citation>
    <scope>NUCLEOTIDE SEQUENCE [LARGE SCALE GENOMIC DNA]</scope>
    <source>
        <strain>ATCC 25618 / H37Rv</strain>
    </source>
</reference>
<reference key="2">
    <citation type="journal article" date="2017" name="Tuberculosis">
        <title>Mycobacterium tuberculosis Rv1474c is a TetR-like transcriptional repressor that regulates aconitase, an essential enzyme and RNA-binding protein, in an iron-responsive manner.</title>
        <authorList>
            <person name="Balakrishnan K."/>
            <person name="Mohareer K."/>
            <person name="Banerjee S."/>
        </authorList>
    </citation>
    <scope>FUNCTION</scope>
    <scope>ACTIVITY REGULATION</scope>
    <scope>SUBUNIT</scope>
    <scope>INDUCTION</scope>
    <scope>MUTAGENESIS OF ARG-45; HIS-50 AND LYS-55</scope>
</reference>
<organism>
    <name type="scientific">Mycobacterium tuberculosis (strain ATCC 25618 / H37Rv)</name>
    <dbReference type="NCBI Taxonomy" id="83332"/>
    <lineage>
        <taxon>Bacteria</taxon>
        <taxon>Bacillati</taxon>
        <taxon>Actinomycetota</taxon>
        <taxon>Actinomycetes</taxon>
        <taxon>Mycobacteriales</taxon>
        <taxon>Mycobacteriaceae</taxon>
        <taxon>Mycobacterium</taxon>
        <taxon>Mycobacterium tuberculosis complex</taxon>
    </lineage>
</organism>
<comment type="function">
    <text evidence="2">Represses the expression of the aconitase gene acn and its own expression, in an iron-responsive manner. Binds to the inverted repeat element present in the upstream region of acn (Rv1475c)-Rv1474c operon. Preferentially binds to major groove of the DNA.</text>
</comment>
<comment type="activity regulation">
    <text evidence="2">Binding to DNA is abolished in the presence of high concentration of iron. Specifically binds to tetracycline, which leads to a conformational change in the structure of the protein and inhibits the DNA binding activity.</text>
</comment>
<comment type="subunit">
    <text evidence="2">Homodimer.</text>
</comment>
<comment type="induction">
    <text evidence="2">Negatively autoregulated.</text>
</comment>
<comment type="miscellaneous">
    <text evidence="2">Its association with indispensable iron homeostasis makes Rv1474c an attractive target for designing novel anti-mycobacterials.</text>
</comment>
<sequence>MPKVSEDHLAARRRQILDGARRCFAEYGYDKATVRRLEQAIGMSRGAIFHHFRDKDALFFALAREDTERMAAVASREGLIGVMRDMLAAPDQFDWLATRLEIARKLRNDPDFSRGWAERSAELAAATTDRLRRQKQANRVRDDVPSDVLRCYLDLVLDGLLARLASGEDPQRLAAVLDLVENSVRRS</sequence>
<keyword id="KW-0238">DNA-binding</keyword>
<keyword id="KW-1185">Reference proteome</keyword>
<keyword id="KW-0678">Repressor</keyword>
<keyword id="KW-0804">Transcription</keyword>
<keyword id="KW-0805">Transcription regulation</keyword>
<gene>
    <name evidence="4" type="ordered locus">Rv1474c</name>
</gene>
<dbReference type="EMBL" id="AL123456">
    <property type="protein sequence ID" value="CCP44234.1"/>
    <property type="molecule type" value="Genomic_DNA"/>
</dbReference>
<dbReference type="RefSeq" id="NP_215990.1">
    <property type="nucleotide sequence ID" value="NC_000962.3"/>
</dbReference>
<dbReference type="RefSeq" id="WP_003407514.1">
    <property type="nucleotide sequence ID" value="NZ_NVQJ01000004.1"/>
</dbReference>
<dbReference type="SMR" id="O53165"/>
<dbReference type="STRING" id="83332.Rv1474c"/>
<dbReference type="PaxDb" id="83332-Rv1474c"/>
<dbReference type="GeneID" id="886543"/>
<dbReference type="KEGG" id="mtu:Rv1474c"/>
<dbReference type="KEGG" id="mtv:RVBD_1474c"/>
<dbReference type="PATRIC" id="fig|83332.111.peg.1641"/>
<dbReference type="TubercuList" id="Rv1474c"/>
<dbReference type="eggNOG" id="COG1309">
    <property type="taxonomic scope" value="Bacteria"/>
</dbReference>
<dbReference type="InParanoid" id="O53165"/>
<dbReference type="OrthoDB" id="5816932at2"/>
<dbReference type="PhylomeDB" id="O53165"/>
<dbReference type="Proteomes" id="UP000001584">
    <property type="component" value="Chromosome"/>
</dbReference>
<dbReference type="GO" id="GO:0009274">
    <property type="term" value="C:peptidoglycan-based cell wall"/>
    <property type="evidence" value="ECO:0007005"/>
    <property type="project" value="MTBBASE"/>
</dbReference>
<dbReference type="GO" id="GO:0003700">
    <property type="term" value="F:DNA-binding transcription factor activity"/>
    <property type="evidence" value="ECO:0000318"/>
    <property type="project" value="GO_Central"/>
</dbReference>
<dbReference type="GO" id="GO:0000976">
    <property type="term" value="F:transcription cis-regulatory region binding"/>
    <property type="evidence" value="ECO:0000318"/>
    <property type="project" value="GO_Central"/>
</dbReference>
<dbReference type="GO" id="GO:0006355">
    <property type="term" value="P:regulation of DNA-templated transcription"/>
    <property type="evidence" value="ECO:0000318"/>
    <property type="project" value="GO_Central"/>
</dbReference>
<dbReference type="FunFam" id="1.10.357.10:FF:000013">
    <property type="entry name" value="TetR family transcriptional regulator"/>
    <property type="match status" value="1"/>
</dbReference>
<dbReference type="Gene3D" id="1.10.357.10">
    <property type="entry name" value="Tetracycline Repressor, domain 2"/>
    <property type="match status" value="1"/>
</dbReference>
<dbReference type="InterPro" id="IPR009057">
    <property type="entry name" value="Homeodomain-like_sf"/>
</dbReference>
<dbReference type="InterPro" id="IPR050109">
    <property type="entry name" value="HTH-type_TetR-like_transc_reg"/>
</dbReference>
<dbReference type="InterPro" id="IPR001647">
    <property type="entry name" value="HTH_TetR"/>
</dbReference>
<dbReference type="InterPro" id="IPR036271">
    <property type="entry name" value="Tet_transcr_reg_TetR-rel_C_sf"/>
</dbReference>
<dbReference type="PANTHER" id="PTHR30055">
    <property type="entry name" value="HTH-TYPE TRANSCRIPTIONAL REGULATOR RUTR"/>
    <property type="match status" value="1"/>
</dbReference>
<dbReference type="PANTHER" id="PTHR30055:SF229">
    <property type="entry name" value="HTH-TYPE TRANSCRIPTIONAL REPRESSOR RV1474C"/>
    <property type="match status" value="1"/>
</dbReference>
<dbReference type="Pfam" id="PF00440">
    <property type="entry name" value="TetR_N"/>
    <property type="match status" value="1"/>
</dbReference>
<dbReference type="PRINTS" id="PR00455">
    <property type="entry name" value="HTHTETR"/>
</dbReference>
<dbReference type="SUPFAM" id="SSF46689">
    <property type="entry name" value="Homeodomain-like"/>
    <property type="match status" value="1"/>
</dbReference>
<dbReference type="SUPFAM" id="SSF48498">
    <property type="entry name" value="Tetracyclin repressor-like, C-terminal domain"/>
    <property type="match status" value="1"/>
</dbReference>
<dbReference type="PROSITE" id="PS50977">
    <property type="entry name" value="HTH_TETR_2"/>
    <property type="match status" value="1"/>
</dbReference>
<name>ACNR_MYCTU</name>
<proteinExistence type="evidence at protein level"/>
<feature type="chain" id="PRO_0000447327" description="HTH-type transcriptional repressor Rv1474c">
    <location>
        <begin position="1"/>
        <end position="187"/>
    </location>
</feature>
<feature type="domain" description="HTH tetR-type" evidence="1">
    <location>
        <begin position="10"/>
        <end position="70"/>
    </location>
</feature>
<feature type="DNA-binding region" description="H-T-H motif" evidence="1">
    <location>
        <begin position="33"/>
        <end position="52"/>
    </location>
</feature>
<feature type="mutagenesis site" description="Cannot bind DNA; when associated with A-50 and A-55." evidence="2">
    <original>R</original>
    <variation>A</variation>
    <location>
        <position position="45"/>
    </location>
</feature>
<feature type="mutagenesis site" description="Cannot bind DNA; when associated with A-45 and A-55." evidence="2">
    <original>H</original>
    <variation>A</variation>
    <location>
        <position position="50"/>
    </location>
</feature>
<feature type="mutagenesis site" description="Cannot bind DNA; when associated with A-45 and A-50." evidence="2">
    <original>K</original>
    <variation>A</variation>
    <location>
        <position position="55"/>
    </location>
</feature>